<feature type="chain" id="PRO_0000337230" description="Protein unc-119 homolog B">
    <location>
        <begin position="1"/>
        <end position="243"/>
    </location>
</feature>
<feature type="region of interest" description="Disordered" evidence="2">
    <location>
        <begin position="1"/>
        <end position="49"/>
    </location>
</feature>
<feature type="compositionally biased region" description="Polar residues" evidence="2">
    <location>
        <begin position="1"/>
        <end position="21"/>
    </location>
</feature>
<feature type="binding site" evidence="1">
    <location>
        <position position="134"/>
    </location>
    <ligand>
        <name>tetradecanoate</name>
        <dbReference type="ChEBI" id="CHEBI:30807"/>
    </ligand>
</feature>
<feature type="sequence conflict" description="In Ref. 1; AAK70467 and 3; AAI62277/AAI62287." evidence="5" ref="1 3">
    <original>H</original>
    <variation>R</variation>
    <location>
        <position position="27"/>
    </location>
</feature>
<evidence type="ECO:0000250" key="1"/>
<evidence type="ECO:0000256" key="2">
    <source>
        <dbReference type="SAM" id="MobiDB-lite"/>
    </source>
</evidence>
<evidence type="ECO:0000269" key="3">
    <source>
    </source>
</evidence>
<evidence type="ECO:0000269" key="4">
    <source>
    </source>
</evidence>
<evidence type="ECO:0000305" key="5"/>
<dbReference type="EMBL" id="AF387342">
    <property type="protein sequence ID" value="AAK70467.1"/>
    <property type="molecule type" value="mRNA"/>
</dbReference>
<dbReference type="EMBL" id="CR376731">
    <property type="protein sequence ID" value="CAP19581.1"/>
    <property type="molecule type" value="Genomic_DNA"/>
</dbReference>
<dbReference type="EMBL" id="BC162277">
    <property type="protein sequence ID" value="AAI62277.1"/>
    <property type="molecule type" value="mRNA"/>
</dbReference>
<dbReference type="EMBL" id="BC162287">
    <property type="protein sequence ID" value="AAI62287.1"/>
    <property type="molecule type" value="mRNA"/>
</dbReference>
<dbReference type="RefSeq" id="NP_997952.1">
    <property type="nucleotide sequence ID" value="NM_212787.1"/>
</dbReference>
<dbReference type="SMR" id="Q90Z08"/>
<dbReference type="FunCoup" id="Q90Z08">
    <property type="interactions" value="1186"/>
</dbReference>
<dbReference type="STRING" id="7955.ENSDARP00000011779"/>
<dbReference type="PaxDb" id="7955-ENSDARP00000011779"/>
<dbReference type="Ensembl" id="ENSDART00000019907">
    <property type="protein sequence ID" value="ENSDARP00000011779"/>
    <property type="gene ID" value="ENSDARG00000009629"/>
</dbReference>
<dbReference type="GeneID" id="338230"/>
<dbReference type="KEGG" id="dre:338230"/>
<dbReference type="AGR" id="ZFIN:ZDB-GENE-030219-130"/>
<dbReference type="CTD" id="84747"/>
<dbReference type="ZFIN" id="ZDB-GENE-030219-130">
    <property type="gene designation" value="unc119b"/>
</dbReference>
<dbReference type="eggNOG" id="KOG4037">
    <property type="taxonomic scope" value="Eukaryota"/>
</dbReference>
<dbReference type="HOGENOM" id="CLU_088825_0_0_1"/>
<dbReference type="InParanoid" id="Q90Z08"/>
<dbReference type="OMA" id="HYLCRPE"/>
<dbReference type="OrthoDB" id="10248777at2759"/>
<dbReference type="PhylomeDB" id="Q90Z08"/>
<dbReference type="TreeFam" id="TF314474"/>
<dbReference type="Reactome" id="R-DRE-5624138">
    <property type="pathway name" value="Trafficking of myristoylated proteins to the cilium"/>
</dbReference>
<dbReference type="PRO" id="PR:Q90Z08"/>
<dbReference type="Proteomes" id="UP000000437">
    <property type="component" value="Chromosome 8"/>
</dbReference>
<dbReference type="Bgee" id="ENSDARG00000009629">
    <property type="expression patterns" value="Expressed in early embryo and 33 other cell types or tissues"/>
</dbReference>
<dbReference type="GO" id="GO:0005929">
    <property type="term" value="C:cilium"/>
    <property type="evidence" value="ECO:0000318"/>
    <property type="project" value="GO_Central"/>
</dbReference>
<dbReference type="GO" id="GO:0008289">
    <property type="term" value="F:lipid binding"/>
    <property type="evidence" value="ECO:0000318"/>
    <property type="project" value="GO_Central"/>
</dbReference>
<dbReference type="GO" id="GO:0060271">
    <property type="term" value="P:cilium assembly"/>
    <property type="evidence" value="ECO:0000315"/>
    <property type="project" value="UniProtKB"/>
</dbReference>
<dbReference type="GO" id="GO:0070121">
    <property type="term" value="P:Kupffer's vesicle development"/>
    <property type="evidence" value="ECO:0000315"/>
    <property type="project" value="ZFIN"/>
</dbReference>
<dbReference type="GO" id="GO:0042953">
    <property type="term" value="P:lipoprotein transport"/>
    <property type="evidence" value="ECO:0000318"/>
    <property type="project" value="GO_Central"/>
</dbReference>
<dbReference type="GO" id="GO:0007399">
    <property type="term" value="P:nervous system development"/>
    <property type="evidence" value="ECO:0000315"/>
    <property type="project" value="ZFIN"/>
</dbReference>
<dbReference type="FunFam" id="2.70.50.40:FF:000001">
    <property type="entry name" value="protein unc-119 homolog A"/>
    <property type="match status" value="1"/>
</dbReference>
<dbReference type="Gene3D" id="2.70.50.40">
    <property type="entry name" value="GMP phosphodiesterase, delta subunit"/>
    <property type="match status" value="1"/>
</dbReference>
<dbReference type="InterPro" id="IPR014756">
    <property type="entry name" value="Ig_E-set"/>
</dbReference>
<dbReference type="InterPro" id="IPR051519">
    <property type="entry name" value="PDE6D_unc-119_myristoyl-bd"/>
</dbReference>
<dbReference type="InterPro" id="IPR008015">
    <property type="entry name" value="PDED_dom"/>
</dbReference>
<dbReference type="InterPro" id="IPR037036">
    <property type="entry name" value="PDED_dom_sf"/>
</dbReference>
<dbReference type="PANTHER" id="PTHR12951:SF3">
    <property type="entry name" value="PROTEIN UNC-119 HOMOLOG B"/>
    <property type="match status" value="1"/>
</dbReference>
<dbReference type="PANTHER" id="PTHR12951">
    <property type="entry name" value="RETINAL PROTEIN 4"/>
    <property type="match status" value="1"/>
</dbReference>
<dbReference type="Pfam" id="PF05351">
    <property type="entry name" value="GMP_PDE_delta"/>
    <property type="match status" value="1"/>
</dbReference>
<dbReference type="SUPFAM" id="SSF81296">
    <property type="entry name" value="E set domains"/>
    <property type="match status" value="1"/>
</dbReference>
<comment type="function">
    <text evidence="4">Myristoyl-binding protein that acts as a cargo adapter: specifically binds the myristoyl moiety of a subset of N-terminally myristoylated proteins and is required for their localization. Plays a key role in localization of proteins to the primary cilium membrane.</text>
</comment>
<comment type="subcellular location">
    <subcellularLocation>
        <location evidence="1">Cell projection</location>
        <location evidence="1">Cilium</location>
    </subcellularLocation>
</comment>
<comment type="tissue specificity">
    <text evidence="3">Detected in embryo. Detected in larvae four days after fertilization, in retina and neural tissues (at protein level). Detected in embryos at the sphere stage, during gastrulation, somitogenesis and in swimming larvae, both within and outside of the developing nervous system. Detected in adults.</text>
</comment>
<comment type="domain">
    <text evidence="1">Adopts an immunoglobulin-like beta-sandwich fold forming a hydrophobic cavity that capture N-terminally myristoylated target peptides. Phe residues within the hydrophobic beta sandwich are required for myristate binding (By similarity).</text>
</comment>
<comment type="similarity">
    <text evidence="5">Belongs to the PDE6D/unc-119 family.</text>
</comment>
<proteinExistence type="evidence at protein level"/>
<sequence length="243" mass="28009">MNSQSSRNETAATAVNGSDSAAASRDHKSGGGVLKRLKSRRNQVDRRPVTEEELRALGRDITPDEVLGLRAVARDYLCKLEDNIYNIDFTRFKIRDLETGTVLFEIAKPPHCDLDEEDDENRDADTSAGRFVRYQFTPAFLKLRTVGATVEFTVGDQPVTNFRMIERHYFQDRLLKSFDFDFGFCIPNSRNTCEHIYEFPQLPEDLIRLMIEHPYETRSDSFYFVDNKLIMHNKADYAYNGGQ</sequence>
<protein>
    <recommendedName>
        <fullName>Protein unc-119 homolog B</fullName>
    </recommendedName>
    <alternativeName>
        <fullName>Protein unc-119 homolog 1</fullName>
    </alternativeName>
</protein>
<keyword id="KW-0966">Cell projection</keyword>
<keyword id="KW-0969">Cilium</keyword>
<keyword id="KW-0970">Cilium biogenesis/degradation</keyword>
<keyword id="KW-0446">Lipid-binding</keyword>
<keyword id="KW-0653">Protein transport</keyword>
<keyword id="KW-1185">Reference proteome</keyword>
<keyword id="KW-0813">Transport</keyword>
<gene>
    <name type="primary">unc119b</name>
    <name type="synonym">unc119</name>
    <name type="synonym">unc119.1</name>
    <name type="synonym">unc119c</name>
    <name type="ORF">si:dkey-117k10</name>
</gene>
<organism>
    <name type="scientific">Danio rerio</name>
    <name type="common">Zebrafish</name>
    <name type="synonym">Brachydanio rerio</name>
    <dbReference type="NCBI Taxonomy" id="7955"/>
    <lineage>
        <taxon>Eukaryota</taxon>
        <taxon>Metazoa</taxon>
        <taxon>Chordata</taxon>
        <taxon>Craniata</taxon>
        <taxon>Vertebrata</taxon>
        <taxon>Euteleostomi</taxon>
        <taxon>Actinopterygii</taxon>
        <taxon>Neopterygii</taxon>
        <taxon>Teleostei</taxon>
        <taxon>Ostariophysi</taxon>
        <taxon>Cypriniformes</taxon>
        <taxon>Danionidae</taxon>
        <taxon>Danioninae</taxon>
        <taxon>Danio</taxon>
    </lineage>
</organism>
<accession>Q90Z08</accession>
<accession>A9C3N9</accession>
<accession>B3DG53</accession>
<accession>Q502S5</accession>
<name>U119B_DANRE</name>
<reference key="1">
    <citation type="journal article" date="2004" name="Genesis">
        <title>unc-119 homolog required for normal development of the zebrafish nervous system.</title>
        <authorList>
            <person name="Manning A.G."/>
            <person name="Crawford B.D."/>
            <person name="Waskiewicz A.J."/>
            <person name="Pilgrim D.B."/>
        </authorList>
    </citation>
    <scope>NUCLEOTIDE SEQUENCE [MRNA]</scope>
    <scope>TISSUE SPECIFICITY</scope>
</reference>
<reference key="2">
    <citation type="journal article" date="2013" name="Nature">
        <title>The zebrafish reference genome sequence and its relationship to the human genome.</title>
        <authorList>
            <person name="Howe K."/>
            <person name="Clark M.D."/>
            <person name="Torroja C.F."/>
            <person name="Torrance J."/>
            <person name="Berthelot C."/>
            <person name="Muffato M."/>
            <person name="Collins J.E."/>
            <person name="Humphray S."/>
            <person name="McLaren K."/>
            <person name="Matthews L."/>
            <person name="McLaren S."/>
            <person name="Sealy I."/>
            <person name="Caccamo M."/>
            <person name="Churcher C."/>
            <person name="Scott C."/>
            <person name="Barrett J.C."/>
            <person name="Koch R."/>
            <person name="Rauch G.J."/>
            <person name="White S."/>
            <person name="Chow W."/>
            <person name="Kilian B."/>
            <person name="Quintais L.T."/>
            <person name="Guerra-Assuncao J.A."/>
            <person name="Zhou Y."/>
            <person name="Gu Y."/>
            <person name="Yen J."/>
            <person name="Vogel J.H."/>
            <person name="Eyre T."/>
            <person name="Redmond S."/>
            <person name="Banerjee R."/>
            <person name="Chi J."/>
            <person name="Fu B."/>
            <person name="Langley E."/>
            <person name="Maguire S.F."/>
            <person name="Laird G.K."/>
            <person name="Lloyd D."/>
            <person name="Kenyon E."/>
            <person name="Donaldson S."/>
            <person name="Sehra H."/>
            <person name="Almeida-King J."/>
            <person name="Loveland J."/>
            <person name="Trevanion S."/>
            <person name="Jones M."/>
            <person name="Quail M."/>
            <person name="Willey D."/>
            <person name="Hunt A."/>
            <person name="Burton J."/>
            <person name="Sims S."/>
            <person name="McLay K."/>
            <person name="Plumb B."/>
            <person name="Davis J."/>
            <person name="Clee C."/>
            <person name="Oliver K."/>
            <person name="Clark R."/>
            <person name="Riddle C."/>
            <person name="Elliot D."/>
            <person name="Threadgold G."/>
            <person name="Harden G."/>
            <person name="Ware D."/>
            <person name="Begum S."/>
            <person name="Mortimore B."/>
            <person name="Kerry G."/>
            <person name="Heath P."/>
            <person name="Phillimore B."/>
            <person name="Tracey A."/>
            <person name="Corby N."/>
            <person name="Dunn M."/>
            <person name="Johnson C."/>
            <person name="Wood J."/>
            <person name="Clark S."/>
            <person name="Pelan S."/>
            <person name="Griffiths G."/>
            <person name="Smith M."/>
            <person name="Glithero R."/>
            <person name="Howden P."/>
            <person name="Barker N."/>
            <person name="Lloyd C."/>
            <person name="Stevens C."/>
            <person name="Harley J."/>
            <person name="Holt K."/>
            <person name="Panagiotidis G."/>
            <person name="Lovell J."/>
            <person name="Beasley H."/>
            <person name="Henderson C."/>
            <person name="Gordon D."/>
            <person name="Auger K."/>
            <person name="Wright D."/>
            <person name="Collins J."/>
            <person name="Raisen C."/>
            <person name="Dyer L."/>
            <person name="Leung K."/>
            <person name="Robertson L."/>
            <person name="Ambridge K."/>
            <person name="Leongamornlert D."/>
            <person name="McGuire S."/>
            <person name="Gilderthorp R."/>
            <person name="Griffiths C."/>
            <person name="Manthravadi D."/>
            <person name="Nichol S."/>
            <person name="Barker G."/>
            <person name="Whitehead S."/>
            <person name="Kay M."/>
            <person name="Brown J."/>
            <person name="Murnane C."/>
            <person name="Gray E."/>
            <person name="Humphries M."/>
            <person name="Sycamore N."/>
            <person name="Barker D."/>
            <person name="Saunders D."/>
            <person name="Wallis J."/>
            <person name="Babbage A."/>
            <person name="Hammond S."/>
            <person name="Mashreghi-Mohammadi M."/>
            <person name="Barr L."/>
            <person name="Martin S."/>
            <person name="Wray P."/>
            <person name="Ellington A."/>
            <person name="Matthews N."/>
            <person name="Ellwood M."/>
            <person name="Woodmansey R."/>
            <person name="Clark G."/>
            <person name="Cooper J."/>
            <person name="Tromans A."/>
            <person name="Grafham D."/>
            <person name="Skuce C."/>
            <person name="Pandian R."/>
            <person name="Andrews R."/>
            <person name="Harrison E."/>
            <person name="Kimberley A."/>
            <person name="Garnett J."/>
            <person name="Fosker N."/>
            <person name="Hall R."/>
            <person name="Garner P."/>
            <person name="Kelly D."/>
            <person name="Bird C."/>
            <person name="Palmer S."/>
            <person name="Gehring I."/>
            <person name="Berger A."/>
            <person name="Dooley C.M."/>
            <person name="Ersan-Urun Z."/>
            <person name="Eser C."/>
            <person name="Geiger H."/>
            <person name="Geisler M."/>
            <person name="Karotki L."/>
            <person name="Kirn A."/>
            <person name="Konantz J."/>
            <person name="Konantz M."/>
            <person name="Oberlander M."/>
            <person name="Rudolph-Geiger S."/>
            <person name="Teucke M."/>
            <person name="Lanz C."/>
            <person name="Raddatz G."/>
            <person name="Osoegawa K."/>
            <person name="Zhu B."/>
            <person name="Rapp A."/>
            <person name="Widaa S."/>
            <person name="Langford C."/>
            <person name="Yang F."/>
            <person name="Schuster S.C."/>
            <person name="Carter N.P."/>
            <person name="Harrow J."/>
            <person name="Ning Z."/>
            <person name="Herrero J."/>
            <person name="Searle S.M."/>
            <person name="Enright A."/>
            <person name="Geisler R."/>
            <person name="Plasterk R.H."/>
            <person name="Lee C."/>
            <person name="Westerfield M."/>
            <person name="de Jong P.J."/>
            <person name="Zon L.I."/>
            <person name="Postlethwait J.H."/>
            <person name="Nusslein-Volhard C."/>
            <person name="Hubbard T.J."/>
            <person name="Roest Crollius H."/>
            <person name="Rogers J."/>
            <person name="Stemple D.L."/>
        </authorList>
    </citation>
    <scope>NUCLEOTIDE SEQUENCE [LARGE SCALE GENOMIC DNA]</scope>
    <source>
        <strain>Tuebingen</strain>
    </source>
</reference>
<reference key="3">
    <citation type="submission" date="2005-05" db="EMBL/GenBank/DDBJ databases">
        <authorList>
            <consortium name="NIH - Zebrafish Gene Collection (ZGC) project"/>
        </authorList>
    </citation>
    <scope>NUCLEOTIDE SEQUENCE [LARGE SCALE MRNA]</scope>
</reference>
<reference key="4">
    <citation type="journal article" date="2011" name="Genes Dev.">
        <title>An ARL3-UNC119-RP2 GTPase cycle targets myristoylated NPHP3 to the primary cilium.</title>
        <authorList>
            <person name="Wright K.J."/>
            <person name="Baye L.M."/>
            <person name="Olivier-Mason A."/>
            <person name="Mukhopadhyay S."/>
            <person name="Sang L."/>
            <person name="Kwong M."/>
            <person name="Wang W."/>
            <person name="Pretorius P.R."/>
            <person name="Sheffield V.C."/>
            <person name="Sengupta P."/>
            <person name="Slusarski D.C."/>
            <person name="Jackson P.K."/>
        </authorList>
    </citation>
    <scope>FUNCTION</scope>
</reference>